<reference key="1">
    <citation type="journal article" date="2005" name="Mol. Phylogenet. Evol.">
        <title>Multigene phylogeny of the Old World mice, Murinae, reveals distinct geographic lineages and the declining utility of mitochondrial genes compared to nuclear genes.</title>
        <authorList>
            <person name="Steppan S.J."/>
            <person name="Adkins R.M."/>
            <person name="Spinks P.Q."/>
            <person name="Hale C."/>
        </authorList>
    </citation>
    <scope>NUCLEOTIDE SEQUENCE [GENOMIC DNA]</scope>
</reference>
<gene>
    <name type="primary">MT-CO2</name>
    <name type="synonym">COII</name>
    <name type="synonym">COX2</name>
    <name type="synonym">COXII</name>
    <name type="synonym">MTCO2</name>
</gene>
<name>COX2_LEMBA</name>
<protein>
    <recommendedName>
        <fullName>Cytochrome c oxidase subunit 2</fullName>
        <ecNumber>7.1.1.9</ecNumber>
    </recommendedName>
    <alternativeName>
        <fullName>Cytochrome c oxidase polypeptide II</fullName>
    </alternativeName>
</protein>
<accession>Q38S02</accession>
<comment type="function">
    <text evidence="3">Component of the cytochrome c oxidase, the last enzyme in the mitochondrial electron transport chain which drives oxidative phosphorylation. The respiratory chain contains 3 multisubunit complexes succinate dehydrogenase (complex II, CII), ubiquinol-cytochrome c oxidoreductase (cytochrome b-c1 complex, complex III, CIII) and cytochrome c oxidase (complex IV, CIV), that cooperate to transfer electrons derived from NADH and succinate to molecular oxygen, creating an electrochemical gradient over the inner membrane that drives transmembrane transport and the ATP synthase. Cytochrome c oxidase is the component of the respiratory chain that catalyzes the reduction of oxygen to water. Electrons originating from reduced cytochrome c in the intermembrane space (IMS) are transferred via the dinuclear copper A center (CU(A)) of subunit 2 and heme A of subunit 1 to the active site in subunit 1, a binuclear center (BNC) formed by heme A3 and copper B (CU(B)). The BNC reduces molecular oxygen to 2 water molecules using 4 electrons from cytochrome c in the IMS and 4 protons from the mitochondrial matrix.</text>
</comment>
<comment type="catalytic activity">
    <reaction evidence="3">
        <text>4 Fe(II)-[cytochrome c] + O2 + 8 H(+)(in) = 4 Fe(III)-[cytochrome c] + 2 H2O + 4 H(+)(out)</text>
        <dbReference type="Rhea" id="RHEA:11436"/>
        <dbReference type="Rhea" id="RHEA-COMP:10350"/>
        <dbReference type="Rhea" id="RHEA-COMP:14399"/>
        <dbReference type="ChEBI" id="CHEBI:15377"/>
        <dbReference type="ChEBI" id="CHEBI:15378"/>
        <dbReference type="ChEBI" id="CHEBI:15379"/>
        <dbReference type="ChEBI" id="CHEBI:29033"/>
        <dbReference type="ChEBI" id="CHEBI:29034"/>
        <dbReference type="EC" id="7.1.1.9"/>
    </reaction>
    <physiologicalReaction direction="left-to-right" evidence="3">
        <dbReference type="Rhea" id="RHEA:11437"/>
    </physiologicalReaction>
</comment>
<comment type="cofactor">
    <cofactor evidence="4">
        <name>Cu cation</name>
        <dbReference type="ChEBI" id="CHEBI:23378"/>
    </cofactor>
    <text evidence="4">Binds a dinuclear copper A center per subunit.</text>
</comment>
<comment type="subunit">
    <text evidence="1 4">Component of the cytochrome c oxidase (complex IV, CIV), a multisubunit enzyme composed of 14 subunits. The complex is composed of a catalytic core of 3 subunits MT-CO1, MT-CO2 and MT-CO3, encoded in the mitochondrial DNA, and 11 supernumerary subunits COX4I, COX5A, COX5B, COX6A, COX6B, COX6C, COX7A, COX7B, COX7C, COX8 and NDUFA4, which are encoded in the nuclear genome. The complex exists as a monomer or a dimer and forms supercomplexes (SCs) in the inner mitochondrial membrane with NADH-ubiquinone oxidoreductase (complex I, CI) and ubiquinol-cytochrome c oxidoreductase (cytochrome b-c1 complex, complex III, CIII), resulting in different assemblies (supercomplex SCI(1)III(2)IV(1) and megacomplex MCI(2)III(2)IV(2)) (By similarity). Found in a complex with TMEM177, COA6, COX18, COX20, SCO1 and SCO2. Interacts with TMEM177 in a COX20-dependent manner. Interacts with COX20. Interacts with COX16 (By similarity).</text>
</comment>
<comment type="subcellular location">
    <subcellularLocation>
        <location evidence="4">Mitochondrion inner membrane</location>
        <topology evidence="4">Multi-pass membrane protein</topology>
    </subcellularLocation>
</comment>
<comment type="similarity">
    <text evidence="5">Belongs to the cytochrome c oxidase subunit 2 family.</text>
</comment>
<dbReference type="EC" id="7.1.1.9"/>
<dbReference type="EMBL" id="DQ019102">
    <property type="protein sequence ID" value="ABA28398.1"/>
    <property type="molecule type" value="Genomic_DNA"/>
</dbReference>
<dbReference type="SMR" id="Q38S02"/>
<dbReference type="GO" id="GO:0005743">
    <property type="term" value="C:mitochondrial inner membrane"/>
    <property type="evidence" value="ECO:0007669"/>
    <property type="project" value="UniProtKB-SubCell"/>
</dbReference>
<dbReference type="GO" id="GO:0045277">
    <property type="term" value="C:respiratory chain complex IV"/>
    <property type="evidence" value="ECO:0000250"/>
    <property type="project" value="UniProtKB"/>
</dbReference>
<dbReference type="GO" id="GO:0005507">
    <property type="term" value="F:copper ion binding"/>
    <property type="evidence" value="ECO:0007669"/>
    <property type="project" value="InterPro"/>
</dbReference>
<dbReference type="GO" id="GO:0004129">
    <property type="term" value="F:cytochrome-c oxidase activity"/>
    <property type="evidence" value="ECO:0007669"/>
    <property type="project" value="UniProtKB-EC"/>
</dbReference>
<dbReference type="GO" id="GO:0042773">
    <property type="term" value="P:ATP synthesis coupled electron transport"/>
    <property type="evidence" value="ECO:0007669"/>
    <property type="project" value="TreeGrafter"/>
</dbReference>
<dbReference type="CDD" id="cd13912">
    <property type="entry name" value="CcO_II_C"/>
    <property type="match status" value="1"/>
</dbReference>
<dbReference type="FunFam" id="1.10.287.90:FF:000001">
    <property type="entry name" value="Cytochrome c oxidase subunit 2"/>
    <property type="match status" value="1"/>
</dbReference>
<dbReference type="FunFam" id="2.60.40.420:FF:000001">
    <property type="entry name" value="Cytochrome c oxidase subunit 2"/>
    <property type="match status" value="1"/>
</dbReference>
<dbReference type="Gene3D" id="1.10.287.90">
    <property type="match status" value="1"/>
</dbReference>
<dbReference type="Gene3D" id="2.60.40.420">
    <property type="entry name" value="Cupredoxins - blue copper proteins"/>
    <property type="match status" value="1"/>
</dbReference>
<dbReference type="InterPro" id="IPR045187">
    <property type="entry name" value="CcO_II"/>
</dbReference>
<dbReference type="InterPro" id="IPR002429">
    <property type="entry name" value="CcO_II-like_C"/>
</dbReference>
<dbReference type="InterPro" id="IPR034210">
    <property type="entry name" value="CcO_II_C"/>
</dbReference>
<dbReference type="InterPro" id="IPR001505">
    <property type="entry name" value="Copper_CuA"/>
</dbReference>
<dbReference type="InterPro" id="IPR008972">
    <property type="entry name" value="Cupredoxin"/>
</dbReference>
<dbReference type="InterPro" id="IPR014222">
    <property type="entry name" value="Cyt_c_oxidase_su2"/>
</dbReference>
<dbReference type="InterPro" id="IPR011759">
    <property type="entry name" value="Cyt_c_oxidase_su2_TM_dom"/>
</dbReference>
<dbReference type="InterPro" id="IPR036257">
    <property type="entry name" value="Cyt_c_oxidase_su2_TM_sf"/>
</dbReference>
<dbReference type="NCBIfam" id="TIGR02866">
    <property type="entry name" value="CoxB"/>
    <property type="match status" value="1"/>
</dbReference>
<dbReference type="PANTHER" id="PTHR22888:SF9">
    <property type="entry name" value="CYTOCHROME C OXIDASE SUBUNIT 2"/>
    <property type="match status" value="1"/>
</dbReference>
<dbReference type="PANTHER" id="PTHR22888">
    <property type="entry name" value="CYTOCHROME C OXIDASE, SUBUNIT II"/>
    <property type="match status" value="1"/>
</dbReference>
<dbReference type="Pfam" id="PF00116">
    <property type="entry name" value="COX2"/>
    <property type="match status" value="1"/>
</dbReference>
<dbReference type="Pfam" id="PF02790">
    <property type="entry name" value="COX2_TM"/>
    <property type="match status" value="1"/>
</dbReference>
<dbReference type="PRINTS" id="PR01166">
    <property type="entry name" value="CYCOXIDASEII"/>
</dbReference>
<dbReference type="SUPFAM" id="SSF49503">
    <property type="entry name" value="Cupredoxins"/>
    <property type="match status" value="1"/>
</dbReference>
<dbReference type="SUPFAM" id="SSF81464">
    <property type="entry name" value="Cytochrome c oxidase subunit II-like, transmembrane region"/>
    <property type="match status" value="1"/>
</dbReference>
<dbReference type="PROSITE" id="PS00078">
    <property type="entry name" value="COX2"/>
    <property type="match status" value="1"/>
</dbReference>
<dbReference type="PROSITE" id="PS50857">
    <property type="entry name" value="COX2_CUA"/>
    <property type="match status" value="1"/>
</dbReference>
<dbReference type="PROSITE" id="PS50999">
    <property type="entry name" value="COX2_TM"/>
    <property type="match status" value="1"/>
</dbReference>
<sequence>MAYPFQLGLQDATSPIMEELMNFHDHTLMIVFLISSLVLYIISLMLTTKLTHTSTMDAQEVETIWTILPAAILILIALPSLRILYMMDEINNPALTVKTMGHQWYWSYEYTDYEDLCFDSYMIPTNDLKPGELRLLEVDNRVVLPMELPIRMLISSEDVLHSWAVPSLGLKTDAIPGRLNQATVSSNRPGLFYGQCSEICGSNHSFMPIVLEMVPLKYFENWSASMI</sequence>
<keyword id="KW-0186">Copper</keyword>
<keyword id="KW-0249">Electron transport</keyword>
<keyword id="KW-0460">Magnesium</keyword>
<keyword id="KW-0472">Membrane</keyword>
<keyword id="KW-0479">Metal-binding</keyword>
<keyword id="KW-0496">Mitochondrion</keyword>
<keyword id="KW-0999">Mitochondrion inner membrane</keyword>
<keyword id="KW-0597">Phosphoprotein</keyword>
<keyword id="KW-0679">Respiratory chain</keyword>
<keyword id="KW-1278">Translocase</keyword>
<keyword id="KW-0812">Transmembrane</keyword>
<keyword id="KW-1133">Transmembrane helix</keyword>
<keyword id="KW-0813">Transport</keyword>
<proteinExistence type="inferred from homology"/>
<geneLocation type="mitochondrion"/>
<feature type="chain" id="PRO_0000254926" description="Cytochrome c oxidase subunit 2">
    <location>
        <begin position="1"/>
        <end position="227"/>
    </location>
</feature>
<feature type="topological domain" description="Mitochondrial intermembrane" evidence="4">
    <location>
        <begin position="1"/>
        <end position="14"/>
    </location>
</feature>
<feature type="transmembrane region" description="Helical; Name=I" evidence="4">
    <location>
        <begin position="15"/>
        <end position="45"/>
    </location>
</feature>
<feature type="topological domain" description="Mitochondrial matrix" evidence="4">
    <location>
        <begin position="46"/>
        <end position="59"/>
    </location>
</feature>
<feature type="transmembrane region" description="Helical; Name=II" evidence="4">
    <location>
        <begin position="60"/>
        <end position="87"/>
    </location>
</feature>
<feature type="topological domain" description="Mitochondrial intermembrane" evidence="4">
    <location>
        <begin position="88"/>
        <end position="227"/>
    </location>
</feature>
<feature type="binding site" evidence="4">
    <location>
        <position position="161"/>
    </location>
    <ligand>
        <name>Cu cation</name>
        <dbReference type="ChEBI" id="CHEBI:23378"/>
        <label>A1</label>
    </ligand>
</feature>
<feature type="binding site" evidence="4">
    <location>
        <position position="196"/>
    </location>
    <ligand>
        <name>Cu cation</name>
        <dbReference type="ChEBI" id="CHEBI:23378"/>
        <label>A1</label>
    </ligand>
</feature>
<feature type="binding site" evidence="4">
    <location>
        <position position="196"/>
    </location>
    <ligand>
        <name>Cu cation</name>
        <dbReference type="ChEBI" id="CHEBI:23378"/>
        <label>A2</label>
    </ligand>
</feature>
<feature type="binding site" evidence="4">
    <location>
        <position position="198"/>
    </location>
    <ligand>
        <name>Cu cation</name>
        <dbReference type="ChEBI" id="CHEBI:23378"/>
        <label>A2</label>
    </ligand>
</feature>
<feature type="binding site" evidence="4">
    <location>
        <position position="198"/>
    </location>
    <ligand>
        <name>Mg(2+)</name>
        <dbReference type="ChEBI" id="CHEBI:18420"/>
        <note>ligand shared with MT-CO1</note>
    </ligand>
</feature>
<feature type="binding site" evidence="4">
    <location>
        <position position="200"/>
    </location>
    <ligand>
        <name>Cu cation</name>
        <dbReference type="ChEBI" id="CHEBI:23378"/>
        <label>A1</label>
    </ligand>
</feature>
<feature type="binding site" evidence="4">
    <location>
        <position position="200"/>
    </location>
    <ligand>
        <name>Cu cation</name>
        <dbReference type="ChEBI" id="CHEBI:23378"/>
        <label>A2</label>
    </ligand>
</feature>
<feature type="binding site" evidence="4">
    <location>
        <position position="204"/>
    </location>
    <ligand>
        <name>Cu cation</name>
        <dbReference type="ChEBI" id="CHEBI:23378"/>
        <label>A2</label>
    </ligand>
</feature>
<feature type="binding site" evidence="4">
    <location>
        <position position="207"/>
    </location>
    <ligand>
        <name>Cu cation</name>
        <dbReference type="ChEBI" id="CHEBI:23378"/>
        <label>A1</label>
    </ligand>
</feature>
<feature type="modified residue" description="Phosphotyrosine" evidence="2">
    <location>
        <position position="218"/>
    </location>
</feature>
<evidence type="ECO:0000250" key="1">
    <source>
        <dbReference type="UniProtKB" id="P00403"/>
    </source>
</evidence>
<evidence type="ECO:0000250" key="2">
    <source>
        <dbReference type="UniProtKB" id="P00406"/>
    </source>
</evidence>
<evidence type="ECO:0000250" key="3">
    <source>
        <dbReference type="UniProtKB" id="P00410"/>
    </source>
</evidence>
<evidence type="ECO:0000250" key="4">
    <source>
        <dbReference type="UniProtKB" id="P68530"/>
    </source>
</evidence>
<evidence type="ECO:0000305" key="5"/>
<organism>
    <name type="scientific">Lemniscomys barbarus</name>
    <name type="common">Barbary striped grass mouse</name>
    <dbReference type="NCBI Taxonomy" id="54111"/>
    <lineage>
        <taxon>Eukaryota</taxon>
        <taxon>Metazoa</taxon>
        <taxon>Chordata</taxon>
        <taxon>Craniata</taxon>
        <taxon>Vertebrata</taxon>
        <taxon>Euteleostomi</taxon>
        <taxon>Mammalia</taxon>
        <taxon>Eutheria</taxon>
        <taxon>Euarchontoglires</taxon>
        <taxon>Glires</taxon>
        <taxon>Rodentia</taxon>
        <taxon>Myomorpha</taxon>
        <taxon>Muroidea</taxon>
        <taxon>Muridae</taxon>
        <taxon>Murinae</taxon>
        <taxon>Lemniscomys</taxon>
    </lineage>
</organism>